<comment type="function">
    <text evidence="2">Antioxidant protein with alkyl hydroperoxidase activity. Required for the reduction of the AhpC active site cysteine residues and for the regeneration of the AhpC enzyme activity.</text>
</comment>
<comment type="catalytic activity">
    <reaction evidence="2">
        <text>N(6)-[(R)-dihydrolipoyl]-L-lysyl-[lipoyl-carrier protein] + a hydroperoxide = N(6)-[(R)-lipoyl]-L-lysyl-[lipoyl-carrier protein] + an alcohol + H2O</text>
        <dbReference type="Rhea" id="RHEA:62636"/>
        <dbReference type="Rhea" id="RHEA-COMP:10502"/>
        <dbReference type="Rhea" id="RHEA-COMP:16355"/>
        <dbReference type="ChEBI" id="CHEBI:15377"/>
        <dbReference type="ChEBI" id="CHEBI:30879"/>
        <dbReference type="ChEBI" id="CHEBI:35924"/>
        <dbReference type="ChEBI" id="CHEBI:83099"/>
        <dbReference type="ChEBI" id="CHEBI:83100"/>
        <dbReference type="EC" id="1.11.1.28"/>
    </reaction>
</comment>
<comment type="similarity">
    <text evidence="2">Belongs to the AhpD family.</text>
</comment>
<accession>B6IQZ3</accession>
<name>AHPD_RHOCS</name>
<organism>
    <name type="scientific">Rhodospirillum centenum (strain ATCC 51521 / SW)</name>
    <dbReference type="NCBI Taxonomy" id="414684"/>
    <lineage>
        <taxon>Bacteria</taxon>
        <taxon>Pseudomonadati</taxon>
        <taxon>Pseudomonadota</taxon>
        <taxon>Alphaproteobacteria</taxon>
        <taxon>Rhodospirillales</taxon>
        <taxon>Rhodospirillaceae</taxon>
        <taxon>Rhodospirillum</taxon>
    </lineage>
</organism>
<sequence length="186" mass="19414">MSIEALKARLPDYAKDLRLNLGSVLTTSSLKPGQVWGAAIAAAYAARNDDVTRAIVAEAAQHLDAAGLTAAKAAGAIMGMNNVYYRTVHLSGNADFKKIPARLRMNVIGNPGVEKVDFELWSLAASAVNGCGMCIEAHEREVMHKGMSTENIQDAVRIAAVIHAVATVLDAEAALSGQDGSTAVAA</sequence>
<protein>
    <recommendedName>
        <fullName evidence="2">Alkyl hydroperoxide reductase AhpD</fullName>
        <ecNumber evidence="2">1.11.1.28</ecNumber>
    </recommendedName>
    <alternativeName>
        <fullName evidence="2">Alkylhydroperoxidase AhpD</fullName>
    </alternativeName>
</protein>
<dbReference type="EC" id="1.11.1.28" evidence="2"/>
<dbReference type="EMBL" id="CP000613">
    <property type="protein sequence ID" value="ACI97879.1"/>
    <property type="molecule type" value="Genomic_DNA"/>
</dbReference>
<dbReference type="RefSeq" id="WP_012565671.1">
    <property type="nucleotide sequence ID" value="NC_011420.2"/>
</dbReference>
<dbReference type="SMR" id="B6IQZ3"/>
<dbReference type="STRING" id="414684.RC1_0440"/>
<dbReference type="KEGG" id="rce:RC1_0440"/>
<dbReference type="eggNOG" id="COG0599">
    <property type="taxonomic scope" value="Bacteria"/>
</dbReference>
<dbReference type="HOGENOM" id="CLU_105328_0_0_5"/>
<dbReference type="OrthoDB" id="9801997at2"/>
<dbReference type="Proteomes" id="UP000001591">
    <property type="component" value="Chromosome"/>
</dbReference>
<dbReference type="GO" id="GO:0008785">
    <property type="term" value="F:alkyl hydroperoxide reductase activity"/>
    <property type="evidence" value="ECO:0007669"/>
    <property type="project" value="UniProtKB-UniRule"/>
</dbReference>
<dbReference type="GO" id="GO:0015036">
    <property type="term" value="F:disulfide oxidoreductase activity"/>
    <property type="evidence" value="ECO:0007669"/>
    <property type="project" value="TreeGrafter"/>
</dbReference>
<dbReference type="GO" id="GO:0032843">
    <property type="term" value="F:hydroperoxide reductase activity"/>
    <property type="evidence" value="ECO:0007669"/>
    <property type="project" value="InterPro"/>
</dbReference>
<dbReference type="GO" id="GO:0051920">
    <property type="term" value="F:peroxiredoxin activity"/>
    <property type="evidence" value="ECO:0007669"/>
    <property type="project" value="InterPro"/>
</dbReference>
<dbReference type="GO" id="GO:0045454">
    <property type="term" value="P:cell redox homeostasis"/>
    <property type="evidence" value="ECO:0007669"/>
    <property type="project" value="TreeGrafter"/>
</dbReference>
<dbReference type="GO" id="GO:0006979">
    <property type="term" value="P:response to oxidative stress"/>
    <property type="evidence" value="ECO:0007669"/>
    <property type="project" value="InterPro"/>
</dbReference>
<dbReference type="Gene3D" id="1.20.1290.10">
    <property type="entry name" value="AhpD-like"/>
    <property type="match status" value="1"/>
</dbReference>
<dbReference type="HAMAP" id="MF_01676">
    <property type="entry name" value="AhpD"/>
    <property type="match status" value="1"/>
</dbReference>
<dbReference type="InterPro" id="IPR004674">
    <property type="entry name" value="AhpD"/>
</dbReference>
<dbReference type="InterPro" id="IPR029032">
    <property type="entry name" value="AhpD-like"/>
</dbReference>
<dbReference type="InterPro" id="IPR004675">
    <property type="entry name" value="AhpD_core"/>
</dbReference>
<dbReference type="InterPro" id="IPR003779">
    <property type="entry name" value="CMD-like"/>
</dbReference>
<dbReference type="NCBIfam" id="TIGR00777">
    <property type="entry name" value="ahpD"/>
    <property type="match status" value="1"/>
</dbReference>
<dbReference type="NCBIfam" id="TIGR00778">
    <property type="entry name" value="ahpD_dom"/>
    <property type="match status" value="1"/>
</dbReference>
<dbReference type="PANTHER" id="PTHR33930">
    <property type="entry name" value="ALKYL HYDROPEROXIDE REDUCTASE AHPD"/>
    <property type="match status" value="1"/>
</dbReference>
<dbReference type="PANTHER" id="PTHR33930:SF7">
    <property type="entry name" value="ALKYL HYDROPEROXIDE REDUCTASE AHPD"/>
    <property type="match status" value="1"/>
</dbReference>
<dbReference type="Pfam" id="PF02627">
    <property type="entry name" value="CMD"/>
    <property type="match status" value="1"/>
</dbReference>
<dbReference type="SUPFAM" id="SSF69118">
    <property type="entry name" value="AhpD-like"/>
    <property type="match status" value="1"/>
</dbReference>
<evidence type="ECO:0000250" key="1"/>
<evidence type="ECO:0000255" key="2">
    <source>
        <dbReference type="HAMAP-Rule" id="MF_01676"/>
    </source>
</evidence>
<gene>
    <name evidence="2" type="primary">ahpD</name>
    <name type="ordered locus">RC1_0440</name>
</gene>
<reference key="1">
    <citation type="submission" date="2007-03" db="EMBL/GenBank/DDBJ databases">
        <title>Genome sequence of Rhodospirillum centenum.</title>
        <authorList>
            <person name="Touchman J.W."/>
            <person name="Bauer C."/>
            <person name="Blankenship R.E."/>
        </authorList>
    </citation>
    <scope>NUCLEOTIDE SEQUENCE [LARGE SCALE GENOMIC DNA]</scope>
    <source>
        <strain>ATCC 51521 / SW</strain>
    </source>
</reference>
<proteinExistence type="inferred from homology"/>
<feature type="chain" id="PRO_1000187338" description="Alkyl hydroperoxide reductase AhpD">
    <location>
        <begin position="1"/>
        <end position="186"/>
    </location>
</feature>
<feature type="active site" description="Proton donor" evidence="2">
    <location>
        <position position="131"/>
    </location>
</feature>
<feature type="active site" description="Cysteine sulfenic acid (-SOH) intermediate" evidence="2">
    <location>
        <position position="134"/>
    </location>
</feature>
<feature type="disulfide bond" evidence="1">
    <location>
        <begin position="131"/>
        <end position="134"/>
    </location>
</feature>
<feature type="disulfide bond" description="Interchain (with AhpC); in linked form" evidence="2">
    <location>
        <position position="134"/>
    </location>
</feature>
<keyword id="KW-0049">Antioxidant</keyword>
<keyword id="KW-1015">Disulfide bond</keyword>
<keyword id="KW-0560">Oxidoreductase</keyword>
<keyword id="KW-0575">Peroxidase</keyword>
<keyword id="KW-0676">Redox-active center</keyword>
<keyword id="KW-1185">Reference proteome</keyword>